<dbReference type="EMBL" id="AK138261">
    <property type="protein sequence ID" value="BAE23598.1"/>
    <property type="molecule type" value="mRNA"/>
</dbReference>
<dbReference type="EMBL" id="AK152833">
    <property type="protein sequence ID" value="BAE31533.1"/>
    <property type="molecule type" value="mRNA"/>
</dbReference>
<dbReference type="EMBL" id="BC030456">
    <property type="protein sequence ID" value="AAH30456.1"/>
    <property type="molecule type" value="mRNA"/>
</dbReference>
<dbReference type="CCDS" id="CCDS25978.1"/>
<dbReference type="RefSeq" id="NP_848479.1">
    <property type="nucleotide sequence ID" value="NM_178392.6"/>
</dbReference>
<dbReference type="SMR" id="Q8K0S9"/>
<dbReference type="BioGRID" id="217627">
    <property type="interactions" value="2"/>
</dbReference>
<dbReference type="FunCoup" id="Q8K0S9">
    <property type="interactions" value="1443"/>
</dbReference>
<dbReference type="STRING" id="10090.ENSMUSP00000021532"/>
<dbReference type="iPTMnet" id="Q8K0S9"/>
<dbReference type="PhosphoSitePlus" id="Q8K0S9"/>
<dbReference type="PaxDb" id="10090-ENSMUSP00000021532"/>
<dbReference type="ProteomicsDB" id="261532"/>
<dbReference type="DNASU" id="75627"/>
<dbReference type="Ensembl" id="ENSMUST00000021532.6">
    <property type="protein sequence ID" value="ENSMUSP00000021532.5"/>
    <property type="gene ID" value="ENSMUSG00000021113.6"/>
</dbReference>
<dbReference type="GeneID" id="75627"/>
<dbReference type="KEGG" id="mmu:75627"/>
<dbReference type="UCSC" id="uc007nwt.1">
    <property type="organism name" value="mouse"/>
</dbReference>
<dbReference type="AGR" id="MGI:1922877"/>
<dbReference type="CTD" id="6617"/>
<dbReference type="MGI" id="MGI:1922877">
    <property type="gene designation" value="Snapc1"/>
</dbReference>
<dbReference type="VEuPathDB" id="HostDB:ENSMUSG00000021113"/>
<dbReference type="eggNOG" id="KOG4746">
    <property type="taxonomic scope" value="Eukaryota"/>
</dbReference>
<dbReference type="GeneTree" id="ENSGT00390000018691"/>
<dbReference type="HOGENOM" id="CLU_067254_0_0_1"/>
<dbReference type="InParanoid" id="Q8K0S9"/>
<dbReference type="OMA" id="RDDMQNV"/>
<dbReference type="OrthoDB" id="20127at2759"/>
<dbReference type="PhylomeDB" id="Q8K0S9"/>
<dbReference type="TreeFam" id="TF324445"/>
<dbReference type="Reactome" id="R-MMU-6807505">
    <property type="pathway name" value="RNA polymerase II transcribes snRNA genes"/>
</dbReference>
<dbReference type="Reactome" id="R-MMU-76071">
    <property type="pathway name" value="RNA Polymerase III Transcription Initiation From Type 3 Promoter"/>
</dbReference>
<dbReference type="BioGRID-ORCS" id="75627">
    <property type="hits" value="24 hits in 75 CRISPR screens"/>
</dbReference>
<dbReference type="ChiTaRS" id="Snapc1">
    <property type="organism name" value="mouse"/>
</dbReference>
<dbReference type="PRO" id="PR:Q8K0S9"/>
<dbReference type="Proteomes" id="UP000000589">
    <property type="component" value="Chromosome 12"/>
</dbReference>
<dbReference type="RNAct" id="Q8K0S9">
    <property type="molecule type" value="protein"/>
</dbReference>
<dbReference type="Bgee" id="ENSMUSG00000021113">
    <property type="expression patterns" value="Expressed in otolith organ and 226 other cell types or tissues"/>
</dbReference>
<dbReference type="ExpressionAtlas" id="Q8K0S9">
    <property type="expression patterns" value="baseline and differential"/>
</dbReference>
<dbReference type="GO" id="GO:0005730">
    <property type="term" value="C:nucleolus"/>
    <property type="evidence" value="ECO:0007669"/>
    <property type="project" value="Ensembl"/>
</dbReference>
<dbReference type="GO" id="GO:0005654">
    <property type="term" value="C:nucleoplasm"/>
    <property type="evidence" value="ECO:0007669"/>
    <property type="project" value="Ensembl"/>
</dbReference>
<dbReference type="GO" id="GO:0003677">
    <property type="term" value="F:DNA binding"/>
    <property type="evidence" value="ECO:0007669"/>
    <property type="project" value="UniProtKB-KW"/>
</dbReference>
<dbReference type="InterPro" id="IPR019188">
    <property type="entry name" value="SNAPC1"/>
</dbReference>
<dbReference type="PANTHER" id="PTHR15131">
    <property type="entry name" value="SMALL NUCLEAR RNA ACTIVATING COMPLEX, POLYPEPTIDE 1"/>
    <property type="match status" value="1"/>
</dbReference>
<dbReference type="PANTHER" id="PTHR15131:SF3">
    <property type="entry name" value="SNRNA-ACTIVATING PROTEIN COMPLEX SUBUNIT 1"/>
    <property type="match status" value="1"/>
</dbReference>
<dbReference type="Pfam" id="PF09808">
    <property type="entry name" value="SNAPC1"/>
    <property type="match status" value="1"/>
</dbReference>
<feature type="chain" id="PRO_0000072019" description="snRNA-activating protein complex subunit 1">
    <location>
        <begin position="1"/>
        <end position="389"/>
    </location>
</feature>
<feature type="region of interest" description="Disordered" evidence="3">
    <location>
        <begin position="1"/>
        <end position="22"/>
    </location>
</feature>
<feature type="region of interest" description="SNAPC3-binding" evidence="1">
    <location>
        <begin position="20"/>
        <end position="187"/>
    </location>
</feature>
<feature type="region of interest" description="SNAPC4-binding" evidence="1">
    <location>
        <begin position="183"/>
        <end position="287"/>
    </location>
</feature>
<feature type="region of interest" description="Disordered" evidence="3">
    <location>
        <begin position="245"/>
        <end position="276"/>
    </location>
</feature>
<feature type="region of interest" description="Disordered" evidence="3">
    <location>
        <begin position="290"/>
        <end position="389"/>
    </location>
</feature>
<feature type="compositionally biased region" description="Low complexity" evidence="3">
    <location>
        <begin position="1"/>
        <end position="15"/>
    </location>
</feature>
<feature type="compositionally biased region" description="Basic and acidic residues" evidence="3">
    <location>
        <begin position="245"/>
        <end position="262"/>
    </location>
</feature>
<feature type="modified residue" description="Phosphoserine" evidence="2">
    <location>
        <position position="308"/>
    </location>
</feature>
<feature type="modified residue" description="Phosphoserine" evidence="2">
    <location>
        <position position="309"/>
    </location>
</feature>
<accession>Q8K0S9</accession>
<name>SNPC1_MOUSE</name>
<reference key="1">
    <citation type="journal article" date="2005" name="Science">
        <title>The transcriptional landscape of the mammalian genome.</title>
        <authorList>
            <person name="Carninci P."/>
            <person name="Kasukawa T."/>
            <person name="Katayama S."/>
            <person name="Gough J."/>
            <person name="Frith M.C."/>
            <person name="Maeda N."/>
            <person name="Oyama R."/>
            <person name="Ravasi T."/>
            <person name="Lenhard B."/>
            <person name="Wells C."/>
            <person name="Kodzius R."/>
            <person name="Shimokawa K."/>
            <person name="Bajic V.B."/>
            <person name="Brenner S.E."/>
            <person name="Batalov S."/>
            <person name="Forrest A.R."/>
            <person name="Zavolan M."/>
            <person name="Davis M.J."/>
            <person name="Wilming L.G."/>
            <person name="Aidinis V."/>
            <person name="Allen J.E."/>
            <person name="Ambesi-Impiombato A."/>
            <person name="Apweiler R."/>
            <person name="Aturaliya R.N."/>
            <person name="Bailey T.L."/>
            <person name="Bansal M."/>
            <person name="Baxter L."/>
            <person name="Beisel K.W."/>
            <person name="Bersano T."/>
            <person name="Bono H."/>
            <person name="Chalk A.M."/>
            <person name="Chiu K.P."/>
            <person name="Choudhary V."/>
            <person name="Christoffels A."/>
            <person name="Clutterbuck D.R."/>
            <person name="Crowe M.L."/>
            <person name="Dalla E."/>
            <person name="Dalrymple B.P."/>
            <person name="de Bono B."/>
            <person name="Della Gatta G."/>
            <person name="di Bernardo D."/>
            <person name="Down T."/>
            <person name="Engstrom P."/>
            <person name="Fagiolini M."/>
            <person name="Faulkner G."/>
            <person name="Fletcher C.F."/>
            <person name="Fukushima T."/>
            <person name="Furuno M."/>
            <person name="Futaki S."/>
            <person name="Gariboldi M."/>
            <person name="Georgii-Hemming P."/>
            <person name="Gingeras T.R."/>
            <person name="Gojobori T."/>
            <person name="Green R.E."/>
            <person name="Gustincich S."/>
            <person name="Harbers M."/>
            <person name="Hayashi Y."/>
            <person name="Hensch T.K."/>
            <person name="Hirokawa N."/>
            <person name="Hill D."/>
            <person name="Huminiecki L."/>
            <person name="Iacono M."/>
            <person name="Ikeo K."/>
            <person name="Iwama A."/>
            <person name="Ishikawa T."/>
            <person name="Jakt M."/>
            <person name="Kanapin A."/>
            <person name="Katoh M."/>
            <person name="Kawasawa Y."/>
            <person name="Kelso J."/>
            <person name="Kitamura H."/>
            <person name="Kitano H."/>
            <person name="Kollias G."/>
            <person name="Krishnan S.P."/>
            <person name="Kruger A."/>
            <person name="Kummerfeld S.K."/>
            <person name="Kurochkin I.V."/>
            <person name="Lareau L.F."/>
            <person name="Lazarevic D."/>
            <person name="Lipovich L."/>
            <person name="Liu J."/>
            <person name="Liuni S."/>
            <person name="McWilliam S."/>
            <person name="Madan Babu M."/>
            <person name="Madera M."/>
            <person name="Marchionni L."/>
            <person name="Matsuda H."/>
            <person name="Matsuzawa S."/>
            <person name="Miki H."/>
            <person name="Mignone F."/>
            <person name="Miyake S."/>
            <person name="Morris K."/>
            <person name="Mottagui-Tabar S."/>
            <person name="Mulder N."/>
            <person name="Nakano N."/>
            <person name="Nakauchi H."/>
            <person name="Ng P."/>
            <person name="Nilsson R."/>
            <person name="Nishiguchi S."/>
            <person name="Nishikawa S."/>
            <person name="Nori F."/>
            <person name="Ohara O."/>
            <person name="Okazaki Y."/>
            <person name="Orlando V."/>
            <person name="Pang K.C."/>
            <person name="Pavan W.J."/>
            <person name="Pavesi G."/>
            <person name="Pesole G."/>
            <person name="Petrovsky N."/>
            <person name="Piazza S."/>
            <person name="Reed J."/>
            <person name="Reid J.F."/>
            <person name="Ring B.Z."/>
            <person name="Ringwald M."/>
            <person name="Rost B."/>
            <person name="Ruan Y."/>
            <person name="Salzberg S.L."/>
            <person name="Sandelin A."/>
            <person name="Schneider C."/>
            <person name="Schoenbach C."/>
            <person name="Sekiguchi K."/>
            <person name="Semple C.A."/>
            <person name="Seno S."/>
            <person name="Sessa L."/>
            <person name="Sheng Y."/>
            <person name="Shibata Y."/>
            <person name="Shimada H."/>
            <person name="Shimada K."/>
            <person name="Silva D."/>
            <person name="Sinclair B."/>
            <person name="Sperling S."/>
            <person name="Stupka E."/>
            <person name="Sugiura K."/>
            <person name="Sultana R."/>
            <person name="Takenaka Y."/>
            <person name="Taki K."/>
            <person name="Tammoja K."/>
            <person name="Tan S.L."/>
            <person name="Tang S."/>
            <person name="Taylor M.S."/>
            <person name="Tegner J."/>
            <person name="Teichmann S.A."/>
            <person name="Ueda H.R."/>
            <person name="van Nimwegen E."/>
            <person name="Verardo R."/>
            <person name="Wei C.L."/>
            <person name="Yagi K."/>
            <person name="Yamanishi H."/>
            <person name="Zabarovsky E."/>
            <person name="Zhu S."/>
            <person name="Zimmer A."/>
            <person name="Hide W."/>
            <person name="Bult C."/>
            <person name="Grimmond S.M."/>
            <person name="Teasdale R.D."/>
            <person name="Liu E.T."/>
            <person name="Brusic V."/>
            <person name="Quackenbush J."/>
            <person name="Wahlestedt C."/>
            <person name="Mattick J.S."/>
            <person name="Hume D.A."/>
            <person name="Kai C."/>
            <person name="Sasaki D."/>
            <person name="Tomaru Y."/>
            <person name="Fukuda S."/>
            <person name="Kanamori-Katayama M."/>
            <person name="Suzuki M."/>
            <person name="Aoki J."/>
            <person name="Arakawa T."/>
            <person name="Iida J."/>
            <person name="Imamura K."/>
            <person name="Itoh M."/>
            <person name="Kato T."/>
            <person name="Kawaji H."/>
            <person name="Kawagashira N."/>
            <person name="Kawashima T."/>
            <person name="Kojima M."/>
            <person name="Kondo S."/>
            <person name="Konno H."/>
            <person name="Nakano K."/>
            <person name="Ninomiya N."/>
            <person name="Nishio T."/>
            <person name="Okada M."/>
            <person name="Plessy C."/>
            <person name="Shibata K."/>
            <person name="Shiraki T."/>
            <person name="Suzuki S."/>
            <person name="Tagami M."/>
            <person name="Waki K."/>
            <person name="Watahiki A."/>
            <person name="Okamura-Oho Y."/>
            <person name="Suzuki H."/>
            <person name="Kawai J."/>
            <person name="Hayashizaki Y."/>
        </authorList>
    </citation>
    <scope>NUCLEOTIDE SEQUENCE [LARGE SCALE MRNA]</scope>
    <source>
        <strain>C57BL/6J</strain>
        <tissue>Bone marrow</tissue>
        <tissue>Hypothalamus</tissue>
    </source>
</reference>
<reference key="2">
    <citation type="journal article" date="2004" name="Genome Res.">
        <title>The status, quality, and expansion of the NIH full-length cDNA project: the Mammalian Gene Collection (MGC).</title>
        <authorList>
            <consortium name="The MGC Project Team"/>
        </authorList>
    </citation>
    <scope>NUCLEOTIDE SEQUENCE [LARGE SCALE MRNA]</scope>
    <source>
        <tissue>Eye</tissue>
    </source>
</reference>
<comment type="function">
    <text evidence="1">Part of the SNAPc complex required for the transcription of both RNA polymerase II and III small-nuclear RNA genes. Binds to the proximal sequence element (PSE), a non-TATA-box basal promoter element common to these 2 types of genes. Recruits TBP and BRF2 to the U6 snRNA TATA box (By similarity).</text>
</comment>
<comment type="subunit">
    <text evidence="1">Part of the SNAPc complex composed of 5 subunits: SNAPC1, SNAPC2, SNAPC3, SNAPC4 and SNAPC5. SNAPC1 interacts with SNAPC3, SNAPC4 and TBP (By similarity).</text>
</comment>
<comment type="subcellular location">
    <subcellularLocation>
        <location evidence="1">Nucleus</location>
    </subcellularLocation>
</comment>
<evidence type="ECO:0000250" key="1"/>
<evidence type="ECO:0000250" key="2">
    <source>
        <dbReference type="UniProtKB" id="Q16533"/>
    </source>
</evidence>
<evidence type="ECO:0000256" key="3">
    <source>
        <dbReference type="SAM" id="MobiDB-lite"/>
    </source>
</evidence>
<gene>
    <name type="primary">Snapc1</name>
</gene>
<sequence>MGTPAGAGTRPTGAGTVEGVGIPPGLQTDYETLLSRFQEMDSVRFEDFTELWRSMKFATIFCGKMRNLKKNMFTKEALALAWRYFLPPHTFQIRVGALYLLYGLYNTQLCQPKQKIRVALKDWDEVIRFQQDLMNAQHFDAAFVFRKLRLDRAFHFTAMPKLLSCRMKKKVQQTEVTQKFKDPNDRVMKLITSDVLEEMLNVHDHYQNMKHAISADKSMPDRALSLVKEDFFENIKNIVLEHQEWHKERKNPSLKPKLKDGEENGEGSSEEPERCERAVSLAKIKAKAFSAVVPVSKSRRHRQSKLDSSDSDSGSGQVQGRAAKRKRTREPAGPAGRKRSSRSKGNAPNERKEEKSLHLSMPIITEEEEEDMGGVRKAEFTAPKRKRKC</sequence>
<organism>
    <name type="scientific">Mus musculus</name>
    <name type="common">Mouse</name>
    <dbReference type="NCBI Taxonomy" id="10090"/>
    <lineage>
        <taxon>Eukaryota</taxon>
        <taxon>Metazoa</taxon>
        <taxon>Chordata</taxon>
        <taxon>Craniata</taxon>
        <taxon>Vertebrata</taxon>
        <taxon>Euteleostomi</taxon>
        <taxon>Mammalia</taxon>
        <taxon>Eutheria</taxon>
        <taxon>Euarchontoglires</taxon>
        <taxon>Glires</taxon>
        <taxon>Rodentia</taxon>
        <taxon>Myomorpha</taxon>
        <taxon>Muroidea</taxon>
        <taxon>Muridae</taxon>
        <taxon>Murinae</taxon>
        <taxon>Mus</taxon>
        <taxon>Mus</taxon>
    </lineage>
</organism>
<protein>
    <recommendedName>
        <fullName>snRNA-activating protein complex subunit 1</fullName>
        <shortName>SNAPc subunit 1</shortName>
    </recommendedName>
    <alternativeName>
        <fullName>Small nuclear RNA-activating complex polypeptide 1</fullName>
    </alternativeName>
    <alternativeName>
        <fullName>snRNA-activating protein complex 43 kDa subunit</fullName>
        <shortName>SNAPc 43 kDa subunit</shortName>
    </alternativeName>
</protein>
<keyword id="KW-0238">DNA-binding</keyword>
<keyword id="KW-0539">Nucleus</keyword>
<keyword id="KW-0597">Phosphoprotein</keyword>
<keyword id="KW-1185">Reference proteome</keyword>
<keyword id="KW-0804">Transcription</keyword>
<keyword id="KW-0805">Transcription regulation</keyword>
<proteinExistence type="evidence at transcript level"/>